<protein>
    <recommendedName>
        <fullName evidence="1">Serine--tRNA ligase</fullName>
        <ecNumber evidence="1">6.1.1.11</ecNumber>
    </recommendedName>
    <alternativeName>
        <fullName evidence="1">Seryl-tRNA synthetase</fullName>
        <shortName evidence="1">SerRS</shortName>
    </alternativeName>
    <alternativeName>
        <fullName evidence="1">Seryl-tRNA(Ser/Sec) synthetase</fullName>
    </alternativeName>
</protein>
<name>SYS_RUBXD</name>
<reference key="1">
    <citation type="submission" date="2006-06" db="EMBL/GenBank/DDBJ databases">
        <title>Complete sequence of Rubrobacter xylanophilus DSM 9941.</title>
        <authorList>
            <consortium name="US DOE Joint Genome Institute"/>
            <person name="Copeland A."/>
            <person name="Lucas S."/>
            <person name="Lapidus A."/>
            <person name="Barry K."/>
            <person name="Detter J.C."/>
            <person name="Glavina del Rio T."/>
            <person name="Hammon N."/>
            <person name="Israni S."/>
            <person name="Dalin E."/>
            <person name="Tice H."/>
            <person name="Pitluck S."/>
            <person name="Munk A.C."/>
            <person name="Brettin T."/>
            <person name="Bruce D."/>
            <person name="Han C."/>
            <person name="Tapia R."/>
            <person name="Gilna P."/>
            <person name="Schmutz J."/>
            <person name="Larimer F."/>
            <person name="Land M."/>
            <person name="Hauser L."/>
            <person name="Kyrpides N."/>
            <person name="Lykidis A."/>
            <person name="da Costa M.S."/>
            <person name="Rainey F.A."/>
            <person name="Empadinhas N."/>
            <person name="Jolivet E."/>
            <person name="Battista J.R."/>
            <person name="Richardson P."/>
        </authorList>
    </citation>
    <scope>NUCLEOTIDE SEQUENCE [LARGE SCALE GENOMIC DNA]</scope>
    <source>
        <strain>DSM 9941 / JCM 11954 / NBRC 16129 / PRD-1</strain>
    </source>
</reference>
<keyword id="KW-0030">Aminoacyl-tRNA synthetase</keyword>
<keyword id="KW-0067">ATP-binding</keyword>
<keyword id="KW-0963">Cytoplasm</keyword>
<keyword id="KW-0436">Ligase</keyword>
<keyword id="KW-0547">Nucleotide-binding</keyword>
<keyword id="KW-0648">Protein biosynthesis</keyword>
<keyword id="KW-1185">Reference proteome</keyword>
<sequence length="424" mass="47647">MLDLRYIRENAEAVKKNCRDRGVEADVDLVVELADRRSALIRELEGLRARQNQLAKAVAKERDERSRGRLIEESRELKGLIPRREEELRGVEERLAEEQLKIPNMTHPEAPVGRDDSENVEIRRWGEAPEFGFEPKDHVELGEALGIIDFDAGAKTTGSKFYFLRGEAVLLELGLVRFALDLLAGRGYELAMTPDLARDRMLLGTGFVPRGPETQIYSVENTDLSLIATAEITLAGQLVDEIVAEESLPRRFAGLSHCFRTEAGAHGRASRGLYRVHQFTKVEMFAFTTPEQSGEMHEEMLSIEEEIFRTLEIPYRVVDICTGDLGAAAYRKYDVEAWMPGRGDYGEVTSTSNTTDYQARRLGIRYRPEGGRPRLLHTLNGTAIAVSRTMIALLENHQREDGSVALPEALVPYVGREVIGPARR</sequence>
<proteinExistence type="inferred from homology"/>
<dbReference type="EC" id="6.1.1.11" evidence="1"/>
<dbReference type="EMBL" id="CP000386">
    <property type="protein sequence ID" value="ABG04052.1"/>
    <property type="molecule type" value="Genomic_DNA"/>
</dbReference>
<dbReference type="RefSeq" id="WP_011564070.1">
    <property type="nucleotide sequence ID" value="NC_008148.1"/>
</dbReference>
<dbReference type="SMR" id="Q1AX26"/>
<dbReference type="STRING" id="266117.Rxyl_1086"/>
<dbReference type="KEGG" id="rxy:Rxyl_1086"/>
<dbReference type="eggNOG" id="COG0172">
    <property type="taxonomic scope" value="Bacteria"/>
</dbReference>
<dbReference type="HOGENOM" id="CLU_023797_1_0_11"/>
<dbReference type="OrthoDB" id="9804647at2"/>
<dbReference type="PhylomeDB" id="Q1AX26"/>
<dbReference type="UniPathway" id="UPA00906">
    <property type="reaction ID" value="UER00895"/>
</dbReference>
<dbReference type="Proteomes" id="UP000006637">
    <property type="component" value="Chromosome"/>
</dbReference>
<dbReference type="GO" id="GO:0005737">
    <property type="term" value="C:cytoplasm"/>
    <property type="evidence" value="ECO:0007669"/>
    <property type="project" value="UniProtKB-SubCell"/>
</dbReference>
<dbReference type="GO" id="GO:0005524">
    <property type="term" value="F:ATP binding"/>
    <property type="evidence" value="ECO:0007669"/>
    <property type="project" value="UniProtKB-UniRule"/>
</dbReference>
<dbReference type="GO" id="GO:0004828">
    <property type="term" value="F:serine-tRNA ligase activity"/>
    <property type="evidence" value="ECO:0007669"/>
    <property type="project" value="UniProtKB-UniRule"/>
</dbReference>
<dbReference type="GO" id="GO:0016260">
    <property type="term" value="P:selenocysteine biosynthetic process"/>
    <property type="evidence" value="ECO:0007669"/>
    <property type="project" value="UniProtKB-UniRule"/>
</dbReference>
<dbReference type="GO" id="GO:0006434">
    <property type="term" value="P:seryl-tRNA aminoacylation"/>
    <property type="evidence" value="ECO:0007669"/>
    <property type="project" value="UniProtKB-UniRule"/>
</dbReference>
<dbReference type="CDD" id="cd00770">
    <property type="entry name" value="SerRS_core"/>
    <property type="match status" value="1"/>
</dbReference>
<dbReference type="Gene3D" id="3.30.930.10">
    <property type="entry name" value="Bira Bifunctional Protein, Domain 2"/>
    <property type="match status" value="1"/>
</dbReference>
<dbReference type="Gene3D" id="1.10.287.40">
    <property type="entry name" value="Serine-tRNA synthetase, tRNA binding domain"/>
    <property type="match status" value="1"/>
</dbReference>
<dbReference type="HAMAP" id="MF_00176">
    <property type="entry name" value="Ser_tRNA_synth_type1"/>
    <property type="match status" value="1"/>
</dbReference>
<dbReference type="InterPro" id="IPR002314">
    <property type="entry name" value="aa-tRNA-synt_IIb"/>
</dbReference>
<dbReference type="InterPro" id="IPR006195">
    <property type="entry name" value="aa-tRNA-synth_II"/>
</dbReference>
<dbReference type="InterPro" id="IPR045864">
    <property type="entry name" value="aa-tRNA-synth_II/BPL/LPL"/>
</dbReference>
<dbReference type="InterPro" id="IPR002317">
    <property type="entry name" value="Ser-tRNA-ligase_type_1"/>
</dbReference>
<dbReference type="InterPro" id="IPR015866">
    <property type="entry name" value="Ser-tRNA-synth_1_N"/>
</dbReference>
<dbReference type="InterPro" id="IPR042103">
    <property type="entry name" value="SerRS_1_N_sf"/>
</dbReference>
<dbReference type="InterPro" id="IPR033729">
    <property type="entry name" value="SerRS_core"/>
</dbReference>
<dbReference type="InterPro" id="IPR010978">
    <property type="entry name" value="tRNA-bd_arm"/>
</dbReference>
<dbReference type="NCBIfam" id="TIGR00414">
    <property type="entry name" value="serS"/>
    <property type="match status" value="1"/>
</dbReference>
<dbReference type="PANTHER" id="PTHR11778">
    <property type="entry name" value="SERYL-TRNA SYNTHETASE"/>
    <property type="match status" value="1"/>
</dbReference>
<dbReference type="Pfam" id="PF02403">
    <property type="entry name" value="Seryl_tRNA_N"/>
    <property type="match status" value="1"/>
</dbReference>
<dbReference type="Pfam" id="PF00587">
    <property type="entry name" value="tRNA-synt_2b"/>
    <property type="match status" value="1"/>
</dbReference>
<dbReference type="PIRSF" id="PIRSF001529">
    <property type="entry name" value="Ser-tRNA-synth_IIa"/>
    <property type="match status" value="1"/>
</dbReference>
<dbReference type="PRINTS" id="PR00981">
    <property type="entry name" value="TRNASYNTHSER"/>
</dbReference>
<dbReference type="SUPFAM" id="SSF55681">
    <property type="entry name" value="Class II aaRS and biotin synthetases"/>
    <property type="match status" value="1"/>
</dbReference>
<dbReference type="SUPFAM" id="SSF46589">
    <property type="entry name" value="tRNA-binding arm"/>
    <property type="match status" value="1"/>
</dbReference>
<dbReference type="PROSITE" id="PS50862">
    <property type="entry name" value="AA_TRNA_LIGASE_II"/>
    <property type="match status" value="1"/>
</dbReference>
<gene>
    <name evidence="1" type="primary">serS</name>
    <name type="ordered locus">Rxyl_1086</name>
</gene>
<feature type="chain" id="PRO_1000019804" description="Serine--tRNA ligase">
    <location>
        <begin position="1"/>
        <end position="424"/>
    </location>
</feature>
<feature type="binding site" evidence="1">
    <location>
        <begin position="229"/>
        <end position="231"/>
    </location>
    <ligand>
        <name>L-serine</name>
        <dbReference type="ChEBI" id="CHEBI:33384"/>
    </ligand>
</feature>
<feature type="binding site" evidence="1">
    <location>
        <begin position="260"/>
        <end position="262"/>
    </location>
    <ligand>
        <name>ATP</name>
        <dbReference type="ChEBI" id="CHEBI:30616"/>
    </ligand>
</feature>
<feature type="binding site" evidence="1">
    <location>
        <position position="276"/>
    </location>
    <ligand>
        <name>ATP</name>
        <dbReference type="ChEBI" id="CHEBI:30616"/>
    </ligand>
</feature>
<feature type="binding site" evidence="1">
    <location>
        <position position="283"/>
    </location>
    <ligand>
        <name>L-serine</name>
        <dbReference type="ChEBI" id="CHEBI:33384"/>
    </ligand>
</feature>
<feature type="binding site" evidence="1">
    <location>
        <begin position="347"/>
        <end position="350"/>
    </location>
    <ligand>
        <name>ATP</name>
        <dbReference type="ChEBI" id="CHEBI:30616"/>
    </ligand>
</feature>
<feature type="binding site" evidence="1">
    <location>
        <position position="382"/>
    </location>
    <ligand>
        <name>L-serine</name>
        <dbReference type="ChEBI" id="CHEBI:33384"/>
    </ligand>
</feature>
<comment type="function">
    <text evidence="1">Catalyzes the attachment of serine to tRNA(Ser). Is also able to aminoacylate tRNA(Sec) with serine, to form the misacylated tRNA L-seryl-tRNA(Sec), which will be further converted into selenocysteinyl-tRNA(Sec).</text>
</comment>
<comment type="catalytic activity">
    <reaction evidence="1">
        <text>tRNA(Ser) + L-serine + ATP = L-seryl-tRNA(Ser) + AMP + diphosphate + H(+)</text>
        <dbReference type="Rhea" id="RHEA:12292"/>
        <dbReference type="Rhea" id="RHEA-COMP:9669"/>
        <dbReference type="Rhea" id="RHEA-COMP:9703"/>
        <dbReference type="ChEBI" id="CHEBI:15378"/>
        <dbReference type="ChEBI" id="CHEBI:30616"/>
        <dbReference type="ChEBI" id="CHEBI:33019"/>
        <dbReference type="ChEBI" id="CHEBI:33384"/>
        <dbReference type="ChEBI" id="CHEBI:78442"/>
        <dbReference type="ChEBI" id="CHEBI:78533"/>
        <dbReference type="ChEBI" id="CHEBI:456215"/>
        <dbReference type="EC" id="6.1.1.11"/>
    </reaction>
</comment>
<comment type="catalytic activity">
    <reaction evidence="1">
        <text>tRNA(Sec) + L-serine + ATP = L-seryl-tRNA(Sec) + AMP + diphosphate + H(+)</text>
        <dbReference type="Rhea" id="RHEA:42580"/>
        <dbReference type="Rhea" id="RHEA-COMP:9742"/>
        <dbReference type="Rhea" id="RHEA-COMP:10128"/>
        <dbReference type="ChEBI" id="CHEBI:15378"/>
        <dbReference type="ChEBI" id="CHEBI:30616"/>
        <dbReference type="ChEBI" id="CHEBI:33019"/>
        <dbReference type="ChEBI" id="CHEBI:33384"/>
        <dbReference type="ChEBI" id="CHEBI:78442"/>
        <dbReference type="ChEBI" id="CHEBI:78533"/>
        <dbReference type="ChEBI" id="CHEBI:456215"/>
        <dbReference type="EC" id="6.1.1.11"/>
    </reaction>
</comment>
<comment type="pathway">
    <text evidence="1">Aminoacyl-tRNA biosynthesis; selenocysteinyl-tRNA(Sec) biosynthesis; L-seryl-tRNA(Sec) from L-serine and tRNA(Sec): step 1/1.</text>
</comment>
<comment type="subunit">
    <text evidence="1">Homodimer. The tRNA molecule binds across the dimer.</text>
</comment>
<comment type="subcellular location">
    <subcellularLocation>
        <location evidence="1">Cytoplasm</location>
    </subcellularLocation>
</comment>
<comment type="domain">
    <text evidence="1">Consists of two distinct domains, a catalytic core and a N-terminal extension that is involved in tRNA binding.</text>
</comment>
<comment type="similarity">
    <text evidence="1">Belongs to the class-II aminoacyl-tRNA synthetase family. Type-1 seryl-tRNA synthetase subfamily.</text>
</comment>
<accession>Q1AX26</accession>
<organism>
    <name type="scientific">Rubrobacter xylanophilus (strain DSM 9941 / JCM 11954 / NBRC 16129 / PRD-1)</name>
    <dbReference type="NCBI Taxonomy" id="266117"/>
    <lineage>
        <taxon>Bacteria</taxon>
        <taxon>Bacillati</taxon>
        <taxon>Actinomycetota</taxon>
        <taxon>Rubrobacteria</taxon>
        <taxon>Rubrobacterales</taxon>
        <taxon>Rubrobacteraceae</taxon>
        <taxon>Rubrobacter</taxon>
    </lineage>
</organism>
<evidence type="ECO:0000255" key="1">
    <source>
        <dbReference type="HAMAP-Rule" id="MF_00176"/>
    </source>
</evidence>